<feature type="chain" id="PRO_0000154928" description="Inward rectifier potassium channel 2">
    <location>
        <begin position="1"/>
        <end position="427"/>
    </location>
</feature>
<feature type="topological domain" description="Cytoplasmic" evidence="1">
    <location>
        <begin position="1"/>
        <end position="81"/>
    </location>
</feature>
<feature type="transmembrane region" description="Helical; Name=M1" evidence="1">
    <location>
        <begin position="82"/>
        <end position="106"/>
    </location>
</feature>
<feature type="topological domain" description="Extracellular" evidence="1">
    <location>
        <begin position="107"/>
        <end position="128"/>
    </location>
</feature>
<feature type="intramembrane region" description="Helical; Pore-forming; Name=H5" evidence="1">
    <location>
        <begin position="129"/>
        <end position="140"/>
    </location>
</feature>
<feature type="intramembrane region" description="Pore-forming" evidence="1">
    <location>
        <begin position="141"/>
        <end position="147"/>
    </location>
</feature>
<feature type="topological domain" description="Extracellular" evidence="1">
    <location>
        <begin position="148"/>
        <end position="156"/>
    </location>
</feature>
<feature type="transmembrane region" description="Helical; Name=M2" evidence="1">
    <location>
        <begin position="157"/>
        <end position="178"/>
    </location>
</feature>
<feature type="topological domain" description="Cytoplasmic" evidence="1">
    <location>
        <begin position="179"/>
        <end position="427"/>
    </location>
</feature>
<feature type="region of interest" description="Polyphosphoinositide (PIP2)-binding" evidence="8">
    <location>
        <begin position="181"/>
        <end position="208"/>
    </location>
</feature>
<feature type="region of interest" description="Disordered" evidence="4">
    <location>
        <begin position="383"/>
        <end position="427"/>
    </location>
</feature>
<feature type="short sequence motif" description="Selectivity filter" evidence="1">
    <location>
        <begin position="142"/>
        <end position="147"/>
    </location>
</feature>
<feature type="short sequence motif" description="PDZ-binding" evidence="3">
    <location>
        <begin position="425"/>
        <end position="427"/>
    </location>
</feature>
<feature type="site" description="Role in the control of polyamine-mediated channel gating and in the blocking by intracellular magnesium" evidence="1">
    <location>
        <position position="172"/>
    </location>
</feature>
<feature type="modified residue" description="S-nitrosocysteine" evidence="2">
    <location>
        <position position="76"/>
    </location>
</feature>
<evidence type="ECO:0000250" key="1"/>
<evidence type="ECO:0000250" key="2">
    <source>
        <dbReference type="UniProtKB" id="P63252"/>
    </source>
</evidence>
<evidence type="ECO:0000255" key="3"/>
<evidence type="ECO:0000256" key="4">
    <source>
        <dbReference type="SAM" id="MobiDB-lite"/>
    </source>
</evidence>
<evidence type="ECO:0000269" key="5">
    <source>
    </source>
</evidence>
<evidence type="ECO:0000269" key="6">
    <source>
    </source>
</evidence>
<evidence type="ECO:0000269" key="7">
    <source>
    </source>
</evidence>
<evidence type="ECO:0000269" key="8">
    <source>
    </source>
</evidence>
<evidence type="ECO:0000305" key="9"/>
<accession>Q64273</accession>
<keyword id="KW-1003">Cell membrane</keyword>
<keyword id="KW-0407">Ion channel</keyword>
<keyword id="KW-0406">Ion transport</keyword>
<keyword id="KW-0472">Membrane</keyword>
<keyword id="KW-0630">Potassium</keyword>
<keyword id="KW-0633">Potassium transport</keyword>
<keyword id="KW-1185">Reference proteome</keyword>
<keyword id="KW-0702">S-nitrosylation</keyword>
<keyword id="KW-0812">Transmembrane</keyword>
<keyword id="KW-1133">Transmembrane helix</keyword>
<keyword id="KW-0813">Transport</keyword>
<keyword id="KW-0851">Voltage-gated channel</keyword>
<gene>
    <name type="primary">Kcnj2</name>
    <name type="synonym">Irk1</name>
</gene>
<organism>
    <name type="scientific">Rattus norvegicus</name>
    <name type="common">Rat</name>
    <dbReference type="NCBI Taxonomy" id="10116"/>
    <lineage>
        <taxon>Eukaryota</taxon>
        <taxon>Metazoa</taxon>
        <taxon>Chordata</taxon>
        <taxon>Craniata</taxon>
        <taxon>Vertebrata</taxon>
        <taxon>Euteleostomi</taxon>
        <taxon>Mammalia</taxon>
        <taxon>Eutheria</taxon>
        <taxon>Euarchontoglires</taxon>
        <taxon>Glires</taxon>
        <taxon>Rodentia</taxon>
        <taxon>Myomorpha</taxon>
        <taxon>Muroidea</taxon>
        <taxon>Muridae</taxon>
        <taxon>Murinae</taxon>
        <taxon>Rattus</taxon>
    </lineage>
</organism>
<comment type="function">
    <text evidence="2 7 8">Inward rectifier potassium channels are characterized by a greater tendency to allow potassium to flow into the cell rather than out of it. Their voltage dependence is regulated by the concentration of extracellular potassium; as external potassium is raised, the voltage range of the channel opening shifts to more positive voltages. The inward rectification is mainly due to the blockage of outward current by internal magnesium (PubMed:7603835, PubMed:9486652). Can be blocked by extracellular barium and cesium. Probably participates in establishing action potential waveform and excitability of neuronal and muscle tissues (By similarity).</text>
</comment>
<comment type="catalytic activity">
    <reaction evidence="7 8">
        <text>K(+)(in) = K(+)(out)</text>
        <dbReference type="Rhea" id="RHEA:29463"/>
        <dbReference type="ChEBI" id="CHEBI:29103"/>
    </reaction>
</comment>
<comment type="activity regulation">
    <text evidence="8">Activated by phosphatidylinositol 4,5 biphosphate (PtdIns(4,5)P2).</text>
</comment>
<comment type="subunit">
    <text evidence="2 5">Homotetramer. Homomultimeric and heteromultimeric association with KCNJ4/Kir2.3 (By similarity). Can form heteromeric channels with Kir2.6/KCNJ18 (By similarity). Associates, via its PDZ-recognition domain, with a complex containing LIN7A, LIN7B, LIN7C, DLG1, CASK and APBA1 (PubMed:14960569).</text>
</comment>
<comment type="interaction">
    <interactant intactId="EBI-703577">
        <id>Q64273</id>
    </interactant>
    <interactant intactId="EBI-389325">
        <id>Q62696</id>
        <label>Dlg1</label>
    </interactant>
    <organismsDiffer>false</organismsDiffer>
    <experiments>3</experiments>
</comment>
<comment type="subcellular location">
    <subcellularLocation>
        <location evidence="6">Cell membrane</location>
        <topology evidence="3">Multi-pass membrane protein</topology>
    </subcellularLocation>
    <subcellularLocation>
        <location evidence="6">Cell membrane</location>
        <location evidence="6">Sarcolemma</location>
        <location evidence="6">T-tubule</location>
    </subcellularLocation>
</comment>
<comment type="tissue specificity">
    <text>Prominently expressed in the central nervous system. Also found in other excitable tissues such as heart and skeletal muscle.</text>
</comment>
<comment type="PTM">
    <text evidence="2">S-nitrosylation increases the open probability and inward rectifying currents.</text>
</comment>
<comment type="similarity">
    <text evidence="9">Belongs to the inward rectifier-type potassium channel (TC 1.A.2.1) family. KCNJ2 subfamily.</text>
</comment>
<sequence>MGSVRTNRYSIVSSEEDGMKLATMAVANGFGNGKSKVHTRQQCRSRFVKKDGHCNVQFINVGEKGQRYLADIFTTCVDIRWRWMLVIFCLAFVLSWLFFGCVFWLIALLHGDLDASKESKACVSEVNSFTAAFLFSIETQTTIGYGFRCVTDECPIAVFMVVFQSIVGCIIDAFIIGAVMAKMAKPKKRNETLVFSHNAVIAMRDGKLCLMWRVGNLRKSHLVEAHVRAQLLKSRITSEGEYIPLDQIDINVGFDSGIDRIFLVSPITIVHEIDEDSPLYDLSKQDIDNADFEIVVILEGMVEATAMTTQCRSSYLANEILWGHRYEPVLFEEKHCYKVDYSRFHKTYEVPNTPLCSARDLAEKKYILSNANSFCYENEVALTSKEEEDSENGVPESTSTDSPPGIDLHNQASVPLEPRPLRRESEI</sequence>
<proteinExistence type="evidence at protein level"/>
<name>KCNJ2_RAT</name>
<protein>
    <recommendedName>
        <fullName>Inward rectifier potassium channel 2</fullName>
    </recommendedName>
    <alternativeName>
        <fullName>Inward rectifier K(+) channel Kir2.1</fullName>
        <shortName>IRK-1</shortName>
        <shortName>RBL-IRK1</shortName>
    </alternativeName>
    <alternativeName>
        <fullName>Potassium channel, inwardly rectifying subfamily J member 2</fullName>
    </alternativeName>
</protein>
<dbReference type="EMBL" id="L48490">
    <property type="protein sequence ID" value="AAB03890.1"/>
    <property type="molecule type" value="mRNA"/>
</dbReference>
<dbReference type="EMBL" id="AF021137">
    <property type="protein sequence ID" value="AAB88795.1"/>
    <property type="molecule type" value="mRNA"/>
</dbReference>
<dbReference type="RefSeq" id="NP_058992.1">
    <property type="nucleotide sequence ID" value="NM_017296.2"/>
</dbReference>
<dbReference type="RefSeq" id="XP_006247629.1">
    <property type="nucleotide sequence ID" value="XM_006247567.3"/>
</dbReference>
<dbReference type="SMR" id="Q64273"/>
<dbReference type="BioGRID" id="248329">
    <property type="interactions" value="2"/>
</dbReference>
<dbReference type="DIP" id="DIP-33299N"/>
<dbReference type="FunCoup" id="Q64273">
    <property type="interactions" value="697"/>
</dbReference>
<dbReference type="IntAct" id="Q64273">
    <property type="interactions" value="3"/>
</dbReference>
<dbReference type="STRING" id="10116.ENSRNOP00000006254"/>
<dbReference type="PhosphoSitePlus" id="Q64273"/>
<dbReference type="PaxDb" id="10116-ENSRNOP00000006254"/>
<dbReference type="ABCD" id="Q64273">
    <property type="antibodies" value="1 sequenced antibody"/>
</dbReference>
<dbReference type="Ensembl" id="ENSRNOT00000102334.1">
    <property type="protein sequence ID" value="ENSRNOP00000079758.1"/>
    <property type="gene ID" value="ENSRNOG00000064933.1"/>
</dbReference>
<dbReference type="GeneID" id="29712"/>
<dbReference type="KEGG" id="rno:29712"/>
<dbReference type="AGR" id="RGD:61968"/>
<dbReference type="CTD" id="3759"/>
<dbReference type="RGD" id="61968">
    <property type="gene designation" value="Kcnj2"/>
</dbReference>
<dbReference type="eggNOG" id="KOG3827">
    <property type="taxonomic scope" value="Eukaryota"/>
</dbReference>
<dbReference type="GeneTree" id="ENSGT01030000234586"/>
<dbReference type="HOGENOM" id="CLU_022738_3_0_1"/>
<dbReference type="InParanoid" id="Q64273"/>
<dbReference type="OMA" id="THPEMDH"/>
<dbReference type="OrthoDB" id="273257at2759"/>
<dbReference type="PhylomeDB" id="Q64273"/>
<dbReference type="TreeFam" id="TF313676"/>
<dbReference type="Reactome" id="R-RNO-1296041">
    <property type="pathway name" value="Activation of G protein gated Potassium channels"/>
</dbReference>
<dbReference type="Reactome" id="R-RNO-1296053">
    <property type="pathway name" value="Classical Kir channels"/>
</dbReference>
<dbReference type="Reactome" id="R-RNO-5576886">
    <property type="pathway name" value="Phase 4 - resting membrane potential"/>
</dbReference>
<dbReference type="Reactome" id="R-RNO-997272">
    <property type="pathway name" value="Inhibition of voltage gated Ca2+ channels via Gbeta/gamma subunits"/>
</dbReference>
<dbReference type="PRO" id="PR:Q64273"/>
<dbReference type="Proteomes" id="UP000002494">
    <property type="component" value="Chromosome 10"/>
</dbReference>
<dbReference type="Bgee" id="ENSRNOG00000004720">
    <property type="expression patterns" value="Expressed in skeletal muscle tissue and 17 other cell types or tissues"/>
</dbReference>
<dbReference type="GO" id="GO:0030425">
    <property type="term" value="C:dendrite"/>
    <property type="evidence" value="ECO:0000314"/>
    <property type="project" value="RGD"/>
</dbReference>
<dbReference type="GO" id="GO:0043197">
    <property type="term" value="C:dendritic spine"/>
    <property type="evidence" value="ECO:0000314"/>
    <property type="project" value="RGD"/>
</dbReference>
<dbReference type="GO" id="GO:0098978">
    <property type="term" value="C:glutamatergic synapse"/>
    <property type="evidence" value="ECO:0000314"/>
    <property type="project" value="SynGO"/>
</dbReference>
<dbReference type="GO" id="GO:0014704">
    <property type="term" value="C:intercalated disc"/>
    <property type="evidence" value="ECO:0000314"/>
    <property type="project" value="RGD"/>
</dbReference>
<dbReference type="GO" id="GO:0016020">
    <property type="term" value="C:membrane"/>
    <property type="evidence" value="ECO:0000250"/>
    <property type="project" value="UniProtKB"/>
</dbReference>
<dbReference type="GO" id="GO:0043025">
    <property type="term" value="C:neuronal cell body"/>
    <property type="evidence" value="ECO:0000314"/>
    <property type="project" value="RGD"/>
</dbReference>
<dbReference type="GO" id="GO:0005886">
    <property type="term" value="C:plasma membrane"/>
    <property type="evidence" value="ECO:0000266"/>
    <property type="project" value="RGD"/>
</dbReference>
<dbReference type="GO" id="GO:0045211">
    <property type="term" value="C:postsynaptic membrane"/>
    <property type="evidence" value="ECO:0000314"/>
    <property type="project" value="SynGO"/>
</dbReference>
<dbReference type="GO" id="GO:0030315">
    <property type="term" value="C:T-tubule"/>
    <property type="evidence" value="ECO:0000314"/>
    <property type="project" value="UniProtKB"/>
</dbReference>
<dbReference type="GO" id="GO:0008076">
    <property type="term" value="C:voltage-gated potassium channel complex"/>
    <property type="evidence" value="ECO:0000266"/>
    <property type="project" value="RGD"/>
</dbReference>
<dbReference type="GO" id="GO:0042802">
    <property type="term" value="F:identical protein binding"/>
    <property type="evidence" value="ECO:0000266"/>
    <property type="project" value="RGD"/>
</dbReference>
<dbReference type="GO" id="GO:0005242">
    <property type="term" value="F:inward rectifier potassium channel activity"/>
    <property type="evidence" value="ECO:0000314"/>
    <property type="project" value="UniProtKB"/>
</dbReference>
<dbReference type="GO" id="GO:0005546">
    <property type="term" value="F:phosphatidylinositol-4,5-bisphosphate binding"/>
    <property type="evidence" value="ECO:0000314"/>
    <property type="project" value="UniProtKB"/>
</dbReference>
<dbReference type="GO" id="GO:0086008">
    <property type="term" value="F:voltage-gated potassium channel activity involved in cardiac muscle cell action potential repolarization"/>
    <property type="evidence" value="ECO:0000266"/>
    <property type="project" value="RGD"/>
</dbReference>
<dbReference type="GO" id="GO:0086001">
    <property type="term" value="P:cardiac muscle cell action potential"/>
    <property type="evidence" value="ECO:0000266"/>
    <property type="project" value="RGD"/>
</dbReference>
<dbReference type="GO" id="GO:0086002">
    <property type="term" value="P:cardiac muscle cell action potential involved in contraction"/>
    <property type="evidence" value="ECO:0000266"/>
    <property type="project" value="RGD"/>
</dbReference>
<dbReference type="GO" id="GO:0071260">
    <property type="term" value="P:cellular response to mechanical stimulus"/>
    <property type="evidence" value="ECO:0000270"/>
    <property type="project" value="RGD"/>
</dbReference>
<dbReference type="GO" id="GO:0015693">
    <property type="term" value="P:magnesium ion transport"/>
    <property type="evidence" value="ECO:0000266"/>
    <property type="project" value="RGD"/>
</dbReference>
<dbReference type="GO" id="GO:0086011">
    <property type="term" value="P:membrane repolarization during action potential"/>
    <property type="evidence" value="ECO:0000266"/>
    <property type="project" value="RGD"/>
</dbReference>
<dbReference type="GO" id="GO:0086013">
    <property type="term" value="P:membrane repolarization during cardiac muscle cell action potential"/>
    <property type="evidence" value="ECO:0000266"/>
    <property type="project" value="RGD"/>
</dbReference>
<dbReference type="GO" id="GO:1901381">
    <property type="term" value="P:positive regulation of potassium ion transmembrane transport"/>
    <property type="evidence" value="ECO:0000315"/>
    <property type="project" value="RGD"/>
</dbReference>
<dbReference type="GO" id="GO:1990573">
    <property type="term" value="P:potassium ion import across plasma membrane"/>
    <property type="evidence" value="ECO:0000266"/>
    <property type="project" value="RGD"/>
</dbReference>
<dbReference type="GO" id="GO:0071805">
    <property type="term" value="P:potassium ion transmembrane transport"/>
    <property type="evidence" value="ECO:0000266"/>
    <property type="project" value="RGD"/>
</dbReference>
<dbReference type="GO" id="GO:0006813">
    <property type="term" value="P:potassium ion transport"/>
    <property type="evidence" value="ECO:0000250"/>
    <property type="project" value="UniProtKB"/>
</dbReference>
<dbReference type="GO" id="GO:0051289">
    <property type="term" value="P:protein homotetramerization"/>
    <property type="evidence" value="ECO:0000250"/>
    <property type="project" value="UniProtKB"/>
</dbReference>
<dbReference type="GO" id="GO:0086004">
    <property type="term" value="P:regulation of cardiac muscle cell contraction"/>
    <property type="evidence" value="ECO:0000315"/>
    <property type="project" value="RGD"/>
</dbReference>
<dbReference type="GO" id="GO:0086091">
    <property type="term" value="P:regulation of heart rate by cardiac conduction"/>
    <property type="evidence" value="ECO:0000266"/>
    <property type="project" value="RGD"/>
</dbReference>
<dbReference type="GO" id="GO:0060306">
    <property type="term" value="P:regulation of membrane repolarization"/>
    <property type="evidence" value="ECO:0000266"/>
    <property type="project" value="RGD"/>
</dbReference>
<dbReference type="GO" id="GO:0034765">
    <property type="term" value="P:regulation of monoatomic ion transmembrane transport"/>
    <property type="evidence" value="ECO:0000318"/>
    <property type="project" value="GO_Central"/>
</dbReference>
<dbReference type="GO" id="GO:0014861">
    <property type="term" value="P:regulation of skeletal muscle contraction via regulation of action potential"/>
    <property type="evidence" value="ECO:0000266"/>
    <property type="project" value="RGD"/>
</dbReference>
<dbReference type="GO" id="GO:0055119">
    <property type="term" value="P:relaxation of cardiac muscle"/>
    <property type="evidence" value="ECO:0000266"/>
    <property type="project" value="RGD"/>
</dbReference>
<dbReference type="GO" id="GO:0090076">
    <property type="term" value="P:relaxation of skeletal muscle"/>
    <property type="evidence" value="ECO:0000266"/>
    <property type="project" value="RGD"/>
</dbReference>
<dbReference type="FunFam" id="1.10.287.70:FF:000039">
    <property type="entry name" value="ATP-sensitive inward rectifier potassium channel 12"/>
    <property type="match status" value="1"/>
</dbReference>
<dbReference type="FunFam" id="2.60.40.1400:FF:000001">
    <property type="entry name" value="G protein-activated inward rectifier potassium channel 2"/>
    <property type="match status" value="1"/>
</dbReference>
<dbReference type="Gene3D" id="1.10.287.70">
    <property type="match status" value="1"/>
</dbReference>
<dbReference type="Gene3D" id="2.60.40.1400">
    <property type="entry name" value="G protein-activated inward rectifier potassium channel 1"/>
    <property type="match status" value="1"/>
</dbReference>
<dbReference type="InterPro" id="IPR014756">
    <property type="entry name" value="Ig_E-set"/>
</dbReference>
<dbReference type="InterPro" id="IPR041647">
    <property type="entry name" value="IRK_C"/>
</dbReference>
<dbReference type="InterPro" id="IPR016449">
    <property type="entry name" value="K_chnl_inward-rec_Kir"/>
</dbReference>
<dbReference type="InterPro" id="IPR003271">
    <property type="entry name" value="K_chnl_inward-rec_Kir2.1"/>
</dbReference>
<dbReference type="InterPro" id="IPR013518">
    <property type="entry name" value="K_chnl_inward-rec_Kir_cyto"/>
</dbReference>
<dbReference type="InterPro" id="IPR013673">
    <property type="entry name" value="K_chnl_inward-rec_Kir_N"/>
</dbReference>
<dbReference type="InterPro" id="IPR040445">
    <property type="entry name" value="Kir_TM"/>
</dbReference>
<dbReference type="PANTHER" id="PTHR11767">
    <property type="entry name" value="INWARD RECTIFIER POTASSIUM CHANNEL"/>
    <property type="match status" value="1"/>
</dbReference>
<dbReference type="PANTHER" id="PTHR11767:SF43">
    <property type="entry name" value="INWARD RECTIFIER POTASSIUM CHANNEL 2"/>
    <property type="match status" value="1"/>
</dbReference>
<dbReference type="Pfam" id="PF01007">
    <property type="entry name" value="IRK"/>
    <property type="match status" value="1"/>
</dbReference>
<dbReference type="Pfam" id="PF17655">
    <property type="entry name" value="IRK_C"/>
    <property type="match status" value="1"/>
</dbReference>
<dbReference type="Pfam" id="PF08466">
    <property type="entry name" value="IRK_N"/>
    <property type="match status" value="1"/>
</dbReference>
<dbReference type="PIRSF" id="PIRSF005465">
    <property type="entry name" value="GIRK_kir"/>
    <property type="match status" value="1"/>
</dbReference>
<dbReference type="PRINTS" id="PR01324">
    <property type="entry name" value="KIR21CHANNEL"/>
</dbReference>
<dbReference type="PRINTS" id="PR01320">
    <property type="entry name" value="KIRCHANNEL"/>
</dbReference>
<dbReference type="SUPFAM" id="SSF81296">
    <property type="entry name" value="E set domains"/>
    <property type="match status" value="1"/>
</dbReference>
<dbReference type="SUPFAM" id="SSF81324">
    <property type="entry name" value="Voltage-gated potassium channels"/>
    <property type="match status" value="1"/>
</dbReference>
<reference key="1">
    <citation type="journal article" date="1995" name="Pflugers Arch.">
        <title>Physiological and molecular characterization of an IRK-type inward rectifier K+ channel in a tumour mast cell line.</title>
        <authorList>
            <person name="Wischmeyer E."/>
            <person name="Lentes K.U."/>
            <person name="Karschin A."/>
        </authorList>
    </citation>
    <scope>NUCLEOTIDE SEQUENCE [MRNA]</scope>
    <scope>FUNCTION</scope>
    <scope>TRANSPORTER ACTIVITY</scope>
</reference>
<reference key="2">
    <citation type="journal article" date="1998" name="Exp. Eye Res.">
        <title>Inwardly rectifying potassium channels in lens epithelium are from the IRK1 (Kir 2.1) family.</title>
        <authorList>
            <person name="Rae J.L."/>
            <person name="Shepard A.R."/>
        </authorList>
    </citation>
    <scope>NUCLEOTIDE SEQUENCE [MRNA]</scope>
    <source>
        <strain>Sprague-Dawley</strain>
        <tissue>Lens epithelium</tissue>
    </source>
</reference>
<reference key="3">
    <citation type="journal article" date="1998" name="Nature">
        <title>Direct activation of inward rectifier potassium channels by PIP2 and its stabilization by Gbetagamma.</title>
        <authorList>
            <person name="Huang C.L."/>
            <person name="Feng S."/>
            <person name="Hilgemann D.W."/>
        </authorList>
    </citation>
    <scope>FUNCTION</scope>
    <scope>TRANSPORTER ACTIVITY</scope>
    <scope>ACTIVITY REGULATION</scope>
    <scope>PIP2-BINDING REGION</scope>
</reference>
<reference key="4">
    <citation type="journal article" date="2004" name="J. Biol. Chem.">
        <title>A multiprotein trafficking complex composed of SAP97, CASK, Veli, and Mint1 is associated with inward rectifier Kir2 potassium channels.</title>
        <authorList>
            <person name="Leonoudakis D."/>
            <person name="Conti L.R."/>
            <person name="Radeke C.M."/>
            <person name="McGuire L.M."/>
            <person name="Vandenberg C.A."/>
        </authorList>
    </citation>
    <scope>ASSOCIATION WITH A COMPLEX CONTAINING CASK; LIN7A; LIN7B; LIN7C; APBA1 AND DLG1</scope>
</reference>
<reference key="5">
    <citation type="journal article" date="2011" name="J. Biol. Chem.">
        <title>Kir2.6 regulates the surface expression of Kir2.x inward rectifier potassium channels.</title>
        <authorList>
            <person name="Dassau L."/>
            <person name="Conti L.R."/>
            <person name="Radeke C.M."/>
            <person name="Ptacek L.J."/>
            <person name="Vandenberg C.A."/>
        </authorList>
    </citation>
    <scope>SUBCELLULAR LOCATION</scope>
</reference>